<dbReference type="EMBL" id="AF008220">
    <property type="protein sequence ID" value="AAC00290.1"/>
    <property type="molecule type" value="Genomic_DNA"/>
</dbReference>
<dbReference type="EMBL" id="AL009126">
    <property type="protein sequence ID" value="CAB14961.1"/>
    <property type="molecule type" value="Genomic_DNA"/>
</dbReference>
<dbReference type="PIR" id="H69998">
    <property type="entry name" value="H69998"/>
</dbReference>
<dbReference type="RefSeq" id="NP_390861.1">
    <property type="nucleotide sequence ID" value="NC_000964.3"/>
</dbReference>
<dbReference type="RefSeq" id="WP_009967991.1">
    <property type="nucleotide sequence ID" value="NZ_OZ025638.1"/>
</dbReference>
<dbReference type="FunCoup" id="O34496">
    <property type="interactions" value="34"/>
</dbReference>
<dbReference type="STRING" id="224308.BSU29830"/>
<dbReference type="PaxDb" id="224308-BSU29830"/>
<dbReference type="EnsemblBacteria" id="CAB14961">
    <property type="protein sequence ID" value="CAB14961"/>
    <property type="gene ID" value="BSU_29830"/>
</dbReference>
<dbReference type="GeneID" id="937506"/>
<dbReference type="KEGG" id="bsu:BSU29830"/>
<dbReference type="PATRIC" id="fig|224308.43.peg.3124"/>
<dbReference type="eggNOG" id="COG4848">
    <property type="taxonomic scope" value="Bacteria"/>
</dbReference>
<dbReference type="InParanoid" id="O34496"/>
<dbReference type="OrthoDB" id="154553at2"/>
<dbReference type="PhylomeDB" id="O34496"/>
<dbReference type="BioCyc" id="BSUB:BSU29830-MONOMER"/>
<dbReference type="Proteomes" id="UP000001570">
    <property type="component" value="Chromosome"/>
</dbReference>
<dbReference type="HAMAP" id="MF_01548">
    <property type="entry name" value="UPF0354"/>
    <property type="match status" value="1"/>
</dbReference>
<dbReference type="InterPro" id="IPR010838">
    <property type="entry name" value="DUF1444"/>
</dbReference>
<dbReference type="NCBIfam" id="NF010189">
    <property type="entry name" value="PRK13668.1"/>
    <property type="match status" value="1"/>
</dbReference>
<dbReference type="Pfam" id="PF07285">
    <property type="entry name" value="DUF1444"/>
    <property type="match status" value="1"/>
</dbReference>
<dbReference type="PIRSF" id="PIRSF012562">
    <property type="entry name" value="UCP012562"/>
    <property type="match status" value="1"/>
</dbReference>
<proteinExistence type="inferred from homology"/>
<comment type="similarity">
    <text evidence="1">Belongs to the UPF0354 family.</text>
</comment>
<accession>O34496</accession>
<accession>Q795T2</accession>
<name>YTPQ_BACSU</name>
<sequence length="269" mass="31043">MKMTSRKLSDILKQRLQHENRSFLFDREKDTLRVEDQTTKKGITLDLPPIIAKWELKKDEAIDEIVYYVSEAMTAMEGKAQEMTGKETRIYPVIRSTSFPDKSSEDIPLIYDDHTAETRIYYALDLGKTYRLIDQRMLEKENWTKERIRETAAFNLRSLPTVVKEDTVAGNYFYFFRANDGYDASRILNEAILNEYKQHAEGELAISVPHQDVLILADIRNESGYDILGQMSMSFFAGGTVPITALSFLYNEGKLEPVFILAKSRPKKD</sequence>
<organism>
    <name type="scientific">Bacillus subtilis (strain 168)</name>
    <dbReference type="NCBI Taxonomy" id="224308"/>
    <lineage>
        <taxon>Bacteria</taxon>
        <taxon>Bacillati</taxon>
        <taxon>Bacillota</taxon>
        <taxon>Bacilli</taxon>
        <taxon>Bacillales</taxon>
        <taxon>Bacillaceae</taxon>
        <taxon>Bacillus</taxon>
    </lineage>
</organism>
<protein>
    <recommendedName>
        <fullName>UPF0354 protein YtpQ</fullName>
    </recommendedName>
</protein>
<gene>
    <name type="primary">ytpQ</name>
    <name type="ordered locus">BSU29830</name>
</gene>
<keyword id="KW-1185">Reference proteome</keyword>
<evidence type="ECO:0000305" key="1"/>
<feature type="chain" id="PRO_0000171100" description="UPF0354 protein YtpQ">
    <location>
        <begin position="1"/>
        <end position="269"/>
    </location>
</feature>
<reference key="1">
    <citation type="journal article" date="1997" name="Microbiology">
        <title>Sequencing and functional annotation of the Bacillus subtilis genes in the 200 kb rrnB-dnaB region.</title>
        <authorList>
            <person name="Lapidus A."/>
            <person name="Galleron N."/>
            <person name="Sorokin A."/>
            <person name="Ehrlich S.D."/>
        </authorList>
    </citation>
    <scope>NUCLEOTIDE SEQUENCE [GENOMIC DNA]</scope>
    <source>
        <strain>168</strain>
    </source>
</reference>
<reference key="2">
    <citation type="journal article" date="1997" name="Nature">
        <title>The complete genome sequence of the Gram-positive bacterium Bacillus subtilis.</title>
        <authorList>
            <person name="Kunst F."/>
            <person name="Ogasawara N."/>
            <person name="Moszer I."/>
            <person name="Albertini A.M."/>
            <person name="Alloni G."/>
            <person name="Azevedo V."/>
            <person name="Bertero M.G."/>
            <person name="Bessieres P."/>
            <person name="Bolotin A."/>
            <person name="Borchert S."/>
            <person name="Borriss R."/>
            <person name="Boursier L."/>
            <person name="Brans A."/>
            <person name="Braun M."/>
            <person name="Brignell S.C."/>
            <person name="Bron S."/>
            <person name="Brouillet S."/>
            <person name="Bruschi C.V."/>
            <person name="Caldwell B."/>
            <person name="Capuano V."/>
            <person name="Carter N.M."/>
            <person name="Choi S.-K."/>
            <person name="Codani J.-J."/>
            <person name="Connerton I.F."/>
            <person name="Cummings N.J."/>
            <person name="Daniel R.A."/>
            <person name="Denizot F."/>
            <person name="Devine K.M."/>
            <person name="Duesterhoeft A."/>
            <person name="Ehrlich S.D."/>
            <person name="Emmerson P.T."/>
            <person name="Entian K.-D."/>
            <person name="Errington J."/>
            <person name="Fabret C."/>
            <person name="Ferrari E."/>
            <person name="Foulger D."/>
            <person name="Fritz C."/>
            <person name="Fujita M."/>
            <person name="Fujita Y."/>
            <person name="Fuma S."/>
            <person name="Galizzi A."/>
            <person name="Galleron N."/>
            <person name="Ghim S.-Y."/>
            <person name="Glaser P."/>
            <person name="Goffeau A."/>
            <person name="Golightly E.J."/>
            <person name="Grandi G."/>
            <person name="Guiseppi G."/>
            <person name="Guy B.J."/>
            <person name="Haga K."/>
            <person name="Haiech J."/>
            <person name="Harwood C.R."/>
            <person name="Henaut A."/>
            <person name="Hilbert H."/>
            <person name="Holsappel S."/>
            <person name="Hosono S."/>
            <person name="Hullo M.-F."/>
            <person name="Itaya M."/>
            <person name="Jones L.-M."/>
            <person name="Joris B."/>
            <person name="Karamata D."/>
            <person name="Kasahara Y."/>
            <person name="Klaerr-Blanchard M."/>
            <person name="Klein C."/>
            <person name="Kobayashi Y."/>
            <person name="Koetter P."/>
            <person name="Koningstein G."/>
            <person name="Krogh S."/>
            <person name="Kumano M."/>
            <person name="Kurita K."/>
            <person name="Lapidus A."/>
            <person name="Lardinois S."/>
            <person name="Lauber J."/>
            <person name="Lazarevic V."/>
            <person name="Lee S.-M."/>
            <person name="Levine A."/>
            <person name="Liu H."/>
            <person name="Masuda S."/>
            <person name="Mauel C."/>
            <person name="Medigue C."/>
            <person name="Medina N."/>
            <person name="Mellado R.P."/>
            <person name="Mizuno M."/>
            <person name="Moestl D."/>
            <person name="Nakai S."/>
            <person name="Noback M."/>
            <person name="Noone D."/>
            <person name="O'Reilly M."/>
            <person name="Ogawa K."/>
            <person name="Ogiwara A."/>
            <person name="Oudega B."/>
            <person name="Park S.-H."/>
            <person name="Parro V."/>
            <person name="Pohl T.M."/>
            <person name="Portetelle D."/>
            <person name="Porwollik S."/>
            <person name="Prescott A.M."/>
            <person name="Presecan E."/>
            <person name="Pujic P."/>
            <person name="Purnelle B."/>
            <person name="Rapoport G."/>
            <person name="Rey M."/>
            <person name="Reynolds S."/>
            <person name="Rieger M."/>
            <person name="Rivolta C."/>
            <person name="Rocha E."/>
            <person name="Roche B."/>
            <person name="Rose M."/>
            <person name="Sadaie Y."/>
            <person name="Sato T."/>
            <person name="Scanlan E."/>
            <person name="Schleich S."/>
            <person name="Schroeter R."/>
            <person name="Scoffone F."/>
            <person name="Sekiguchi J."/>
            <person name="Sekowska A."/>
            <person name="Seror S.J."/>
            <person name="Serror P."/>
            <person name="Shin B.-S."/>
            <person name="Soldo B."/>
            <person name="Sorokin A."/>
            <person name="Tacconi E."/>
            <person name="Takagi T."/>
            <person name="Takahashi H."/>
            <person name="Takemaru K."/>
            <person name="Takeuchi M."/>
            <person name="Tamakoshi A."/>
            <person name="Tanaka T."/>
            <person name="Terpstra P."/>
            <person name="Tognoni A."/>
            <person name="Tosato V."/>
            <person name="Uchiyama S."/>
            <person name="Vandenbol M."/>
            <person name="Vannier F."/>
            <person name="Vassarotti A."/>
            <person name="Viari A."/>
            <person name="Wambutt R."/>
            <person name="Wedler E."/>
            <person name="Wedler H."/>
            <person name="Weitzenegger T."/>
            <person name="Winters P."/>
            <person name="Wipat A."/>
            <person name="Yamamoto H."/>
            <person name="Yamane K."/>
            <person name="Yasumoto K."/>
            <person name="Yata K."/>
            <person name="Yoshida K."/>
            <person name="Yoshikawa H.-F."/>
            <person name="Zumstein E."/>
            <person name="Yoshikawa H."/>
            <person name="Danchin A."/>
        </authorList>
    </citation>
    <scope>NUCLEOTIDE SEQUENCE [LARGE SCALE GENOMIC DNA]</scope>
    <source>
        <strain>168</strain>
    </source>
</reference>